<dbReference type="EC" id="1.3.1.89" evidence="1"/>
<dbReference type="EC" id="1.3.1.-" evidence="3"/>
<dbReference type="EMBL" id="AACD01000013">
    <property type="protein sequence ID" value="EAA65648.1"/>
    <property type="molecule type" value="Genomic_DNA"/>
</dbReference>
<dbReference type="EMBL" id="BN001308">
    <property type="protein sequence ID" value="CBF88723.1"/>
    <property type="molecule type" value="Genomic_DNA"/>
</dbReference>
<dbReference type="RefSeq" id="XP_658422.1">
    <property type="nucleotide sequence ID" value="XM_653330.1"/>
</dbReference>
<dbReference type="SMR" id="Q5BF62"/>
<dbReference type="FunCoup" id="Q5BF62">
    <property type="interactions" value="880"/>
</dbReference>
<dbReference type="STRING" id="227321.Q5BF62"/>
<dbReference type="EnsemblFungi" id="CBF88723">
    <property type="protein sequence ID" value="CBF88723"/>
    <property type="gene ID" value="ANIA_00818"/>
</dbReference>
<dbReference type="KEGG" id="ani:ANIA_00818"/>
<dbReference type="VEuPathDB" id="FungiDB:AN0818"/>
<dbReference type="eggNOG" id="KOG2333">
    <property type="taxonomic scope" value="Eukaryota"/>
</dbReference>
<dbReference type="HOGENOM" id="CLU_013299_7_0_1"/>
<dbReference type="InParanoid" id="Q5BF62"/>
<dbReference type="OMA" id="WSYIAEC"/>
<dbReference type="OrthoDB" id="259935at2759"/>
<dbReference type="Proteomes" id="UP000000560">
    <property type="component" value="Chromosome VIII"/>
</dbReference>
<dbReference type="GO" id="GO:0005737">
    <property type="term" value="C:cytoplasm"/>
    <property type="evidence" value="ECO:0007669"/>
    <property type="project" value="UniProtKB-SubCell"/>
</dbReference>
<dbReference type="GO" id="GO:0034399">
    <property type="term" value="C:nuclear periphery"/>
    <property type="evidence" value="ECO:0007669"/>
    <property type="project" value="EnsemblFungi"/>
</dbReference>
<dbReference type="GO" id="GO:0050660">
    <property type="term" value="F:flavin adenine dinucleotide binding"/>
    <property type="evidence" value="ECO:0007669"/>
    <property type="project" value="InterPro"/>
</dbReference>
<dbReference type="GO" id="GO:0106414">
    <property type="term" value="F:mRNA dihydrouridine synthase activity"/>
    <property type="evidence" value="ECO:0007669"/>
    <property type="project" value="RHEA"/>
</dbReference>
<dbReference type="GO" id="GO:0017150">
    <property type="term" value="F:tRNA dihydrouridine synthase activity"/>
    <property type="evidence" value="ECO:0000318"/>
    <property type="project" value="GO_Central"/>
</dbReference>
<dbReference type="GO" id="GO:0102265">
    <property type="term" value="F:tRNA-dihydrouridine47 synthase activity"/>
    <property type="evidence" value="ECO:0007669"/>
    <property type="project" value="UniProtKB-EC"/>
</dbReference>
<dbReference type="GO" id="GO:0008270">
    <property type="term" value="F:zinc ion binding"/>
    <property type="evidence" value="ECO:0007669"/>
    <property type="project" value="UniProtKB-KW"/>
</dbReference>
<dbReference type="GO" id="GO:0006397">
    <property type="term" value="P:mRNA processing"/>
    <property type="evidence" value="ECO:0007669"/>
    <property type="project" value="UniProtKB-KW"/>
</dbReference>
<dbReference type="CDD" id="cd02801">
    <property type="entry name" value="DUS_like_FMN"/>
    <property type="match status" value="1"/>
</dbReference>
<dbReference type="FunFam" id="3.20.20.70:FF:000145">
    <property type="entry name" value="tRNA-dihydrouridine(47) synthase [NAD(P)(+)]"/>
    <property type="match status" value="1"/>
</dbReference>
<dbReference type="Gene3D" id="3.20.20.70">
    <property type="entry name" value="Aldolase class I"/>
    <property type="match status" value="1"/>
</dbReference>
<dbReference type="Gene3D" id="4.10.1000.10">
    <property type="entry name" value="Zinc finger, CCCH-type"/>
    <property type="match status" value="1"/>
</dbReference>
<dbReference type="InterPro" id="IPR013785">
    <property type="entry name" value="Aldolase_TIM"/>
</dbReference>
<dbReference type="InterPro" id="IPR035587">
    <property type="entry name" value="DUS-like_FMN-bd"/>
</dbReference>
<dbReference type="InterPro" id="IPR018517">
    <property type="entry name" value="tRNA_hU_synthase_CS"/>
</dbReference>
<dbReference type="InterPro" id="IPR000571">
    <property type="entry name" value="Znf_CCCH"/>
</dbReference>
<dbReference type="PANTHER" id="PTHR45846">
    <property type="entry name" value="TRNA-DIHYDROURIDINE(47) SYNTHASE [NAD(P)(+)]-LIKE"/>
    <property type="match status" value="1"/>
</dbReference>
<dbReference type="PANTHER" id="PTHR45846:SF1">
    <property type="entry name" value="TRNA-DIHYDROURIDINE(47) SYNTHASE [NAD(P)(+)]-LIKE"/>
    <property type="match status" value="1"/>
</dbReference>
<dbReference type="Pfam" id="PF01207">
    <property type="entry name" value="Dus"/>
    <property type="match status" value="2"/>
</dbReference>
<dbReference type="SUPFAM" id="SSF51395">
    <property type="entry name" value="FMN-linked oxidoreductases"/>
    <property type="match status" value="1"/>
</dbReference>
<dbReference type="PROSITE" id="PS01136">
    <property type="entry name" value="UPF0034"/>
    <property type="match status" value="1"/>
</dbReference>
<dbReference type="PROSITE" id="PS50103">
    <property type="entry name" value="ZF_C3H1"/>
    <property type="match status" value="2"/>
</dbReference>
<sequence length="714" mass="80468">MEGTAQNLDVEVPKQDLPNGTDSTGEPPLKKVRLEEPASDQQNGQAPPRLKGVAPIKAEFLIPKPKQGQAAVSSTDDAAEAAAYKDREDEKKGKKKKTTGQNKNRTFGRSQDSKGLCASRVYSPEFSPAECPFGDKCRFEHDLRTYLKEHKREDLNTFNGVCPVWSARGKCDAGWKCRFVGSHSIERVTEDGRKELVLVEDEERRKKAQPVFPSAAEDGTVNTTSPADKIALAKRQRPTPRADAYSDWLDLTSKELEKYFHGGQQNKDAHPDTAQDKEEKEENRATYTEAPFMPSEKRRLYFGPETPALAPLTTQGNLPFRRLCVELGAQLTYSEMALSMPLIQGHKPEWALMRAHETEALPPTVSARASVVQDYDNSKDMKFGAQIAGNKYRWVMKATEVLSSLTPNLRVIDLNCGCPIDLLYREGSGSALLDAPSKLEKMLRGMNAVSEQIPITVKIRTGTRDNTPNAQKLVERLILGGHEASMLNCGPSGVAAITLHGRSRQQRYTREANWEYISETAALIKRLNEKSDEVTDTIREPEERMRPNGGKTWFLGNGDCYSHVDYEDHIKNAKVDSVMVGRGALIKPWLFEEIQAGQYLDKSASERLAYVEKFARYGMETWGSDEYGIGITRRFLLEWLSFACRYVPIGLLEYLPPKINDRPPYWRGRNDMETLMGSHDYRDWIKISEMFLGPAHKDFKFEPKHKSNSYDTEG</sequence>
<gene>
    <name type="primary">dus3</name>
    <name type="ORF">AN0818</name>
</gene>
<reference key="1">
    <citation type="journal article" date="2005" name="Nature">
        <title>Sequencing of Aspergillus nidulans and comparative analysis with A. fumigatus and A. oryzae.</title>
        <authorList>
            <person name="Galagan J.E."/>
            <person name="Calvo S.E."/>
            <person name="Cuomo C."/>
            <person name="Ma L.-J."/>
            <person name="Wortman J.R."/>
            <person name="Batzoglou S."/>
            <person name="Lee S.-I."/>
            <person name="Bastuerkmen M."/>
            <person name="Spevak C.C."/>
            <person name="Clutterbuck J."/>
            <person name="Kapitonov V."/>
            <person name="Jurka J."/>
            <person name="Scazzocchio C."/>
            <person name="Farman M.L."/>
            <person name="Butler J."/>
            <person name="Purcell S."/>
            <person name="Harris S."/>
            <person name="Braus G.H."/>
            <person name="Draht O."/>
            <person name="Busch S."/>
            <person name="D'Enfert C."/>
            <person name="Bouchier C."/>
            <person name="Goldman G.H."/>
            <person name="Bell-Pedersen D."/>
            <person name="Griffiths-Jones S."/>
            <person name="Doonan J.H."/>
            <person name="Yu J."/>
            <person name="Vienken K."/>
            <person name="Pain A."/>
            <person name="Freitag M."/>
            <person name="Selker E.U."/>
            <person name="Archer D.B."/>
            <person name="Penalva M.A."/>
            <person name="Oakley B.R."/>
            <person name="Momany M."/>
            <person name="Tanaka T."/>
            <person name="Kumagai T."/>
            <person name="Asai K."/>
            <person name="Machida M."/>
            <person name="Nierman W.C."/>
            <person name="Denning D.W."/>
            <person name="Caddick M.X."/>
            <person name="Hynes M."/>
            <person name="Paoletti M."/>
            <person name="Fischer R."/>
            <person name="Miller B.L."/>
            <person name="Dyer P.S."/>
            <person name="Sachs M.S."/>
            <person name="Osmani S.A."/>
            <person name="Birren B.W."/>
        </authorList>
    </citation>
    <scope>NUCLEOTIDE SEQUENCE [LARGE SCALE GENOMIC DNA]</scope>
    <source>
        <strain>FGSC A4 / ATCC 38163 / CBS 112.46 / NRRL 194 / M139</strain>
    </source>
</reference>
<reference key="2">
    <citation type="journal article" date="2009" name="Fungal Genet. Biol.">
        <title>The 2008 update of the Aspergillus nidulans genome annotation: a community effort.</title>
        <authorList>
            <person name="Wortman J.R."/>
            <person name="Gilsenan J.M."/>
            <person name="Joardar V."/>
            <person name="Deegan J."/>
            <person name="Clutterbuck J."/>
            <person name="Andersen M.R."/>
            <person name="Archer D."/>
            <person name="Bencina M."/>
            <person name="Braus G."/>
            <person name="Coutinho P."/>
            <person name="von Dohren H."/>
            <person name="Doonan J."/>
            <person name="Driessen A.J."/>
            <person name="Durek P."/>
            <person name="Espeso E."/>
            <person name="Fekete E."/>
            <person name="Flipphi M."/>
            <person name="Estrada C.G."/>
            <person name="Geysens S."/>
            <person name="Goldman G."/>
            <person name="de Groot P.W."/>
            <person name="Hansen K."/>
            <person name="Harris S.D."/>
            <person name="Heinekamp T."/>
            <person name="Helmstaedt K."/>
            <person name="Henrissat B."/>
            <person name="Hofmann G."/>
            <person name="Homan T."/>
            <person name="Horio T."/>
            <person name="Horiuchi H."/>
            <person name="James S."/>
            <person name="Jones M."/>
            <person name="Karaffa L."/>
            <person name="Karanyi Z."/>
            <person name="Kato M."/>
            <person name="Keller N."/>
            <person name="Kelly D.E."/>
            <person name="Kiel J.A."/>
            <person name="Kim J.M."/>
            <person name="van der Klei I.J."/>
            <person name="Klis F.M."/>
            <person name="Kovalchuk A."/>
            <person name="Krasevec N."/>
            <person name="Kubicek C.P."/>
            <person name="Liu B."/>
            <person name="Maccabe A."/>
            <person name="Meyer V."/>
            <person name="Mirabito P."/>
            <person name="Miskei M."/>
            <person name="Mos M."/>
            <person name="Mullins J."/>
            <person name="Nelson D.R."/>
            <person name="Nielsen J."/>
            <person name="Oakley B.R."/>
            <person name="Osmani S.A."/>
            <person name="Pakula T."/>
            <person name="Paszewski A."/>
            <person name="Paulsen I."/>
            <person name="Pilsyk S."/>
            <person name="Pocsi I."/>
            <person name="Punt P.J."/>
            <person name="Ram A.F."/>
            <person name="Ren Q."/>
            <person name="Robellet X."/>
            <person name="Robson G."/>
            <person name="Seiboth B."/>
            <person name="van Solingen P."/>
            <person name="Specht T."/>
            <person name="Sun J."/>
            <person name="Taheri-Talesh N."/>
            <person name="Takeshita N."/>
            <person name="Ussery D."/>
            <person name="vanKuyk P.A."/>
            <person name="Visser H."/>
            <person name="van de Vondervoort P.J."/>
            <person name="de Vries R.P."/>
            <person name="Walton J."/>
            <person name="Xiang X."/>
            <person name="Xiong Y."/>
            <person name="Zeng A.P."/>
            <person name="Brandt B.W."/>
            <person name="Cornell M.J."/>
            <person name="van den Hondel C.A."/>
            <person name="Visser J."/>
            <person name="Oliver S.G."/>
            <person name="Turner G."/>
        </authorList>
    </citation>
    <scope>GENOME REANNOTATION</scope>
    <source>
        <strain>FGSC A4 / ATCC 38163 / CBS 112.46 / NRRL 194 / M139</strain>
    </source>
</reference>
<name>DUS3_EMENI</name>
<protein>
    <recommendedName>
        <fullName>tRNA-dihydrouridine(47) synthase [NAD(P)(+)]</fullName>
        <ecNumber evidence="1">1.3.1.89</ecNumber>
    </recommendedName>
    <alternativeName>
        <fullName>mRNA-dihydrouridine synthase dus3</fullName>
        <ecNumber evidence="3">1.3.1.-</ecNumber>
    </alternativeName>
    <alternativeName>
        <fullName>tRNA-dihydrouridine synthase 3</fullName>
    </alternativeName>
</protein>
<keyword id="KW-0963">Cytoplasm</keyword>
<keyword id="KW-0285">Flavoprotein</keyword>
<keyword id="KW-0288">FMN</keyword>
<keyword id="KW-0479">Metal-binding</keyword>
<keyword id="KW-0507">mRNA processing</keyword>
<keyword id="KW-0520">NAD</keyword>
<keyword id="KW-0521">NADP</keyword>
<keyword id="KW-0539">Nucleus</keyword>
<keyword id="KW-0560">Oxidoreductase</keyword>
<keyword id="KW-1185">Reference proteome</keyword>
<keyword id="KW-0677">Repeat</keyword>
<keyword id="KW-0819">tRNA processing</keyword>
<keyword id="KW-0862">Zinc</keyword>
<keyword id="KW-0863">Zinc-finger</keyword>
<evidence type="ECO:0000250" key="1">
    <source>
        <dbReference type="UniProtKB" id="Q06053"/>
    </source>
</evidence>
<evidence type="ECO:0000250" key="2">
    <source>
        <dbReference type="UniProtKB" id="Q5SMC7"/>
    </source>
</evidence>
<evidence type="ECO:0000250" key="3">
    <source>
        <dbReference type="UniProtKB" id="Q9UTH9"/>
    </source>
</evidence>
<evidence type="ECO:0000255" key="4">
    <source>
        <dbReference type="PROSITE-ProRule" id="PRU00723"/>
    </source>
</evidence>
<evidence type="ECO:0000256" key="5">
    <source>
        <dbReference type="SAM" id="MobiDB-lite"/>
    </source>
</evidence>
<evidence type="ECO:0000305" key="6"/>
<feature type="chain" id="PRO_0000330239" description="tRNA-dihydrouridine(47) synthase [NAD(P)(+)]">
    <location>
        <begin position="1"/>
        <end position="714"/>
    </location>
</feature>
<feature type="zinc finger region" description="C3H1-type 1" evidence="4">
    <location>
        <begin position="111"/>
        <end position="144"/>
    </location>
</feature>
<feature type="zinc finger region" description="C3H1-type 2" evidence="4">
    <location>
        <begin position="161"/>
        <end position="186"/>
    </location>
</feature>
<feature type="region of interest" description="Disordered" evidence="5">
    <location>
        <begin position="1"/>
        <end position="111"/>
    </location>
</feature>
<feature type="region of interest" description="Disordered" evidence="5">
    <location>
        <begin position="202"/>
        <end position="238"/>
    </location>
</feature>
<feature type="region of interest" description="Disordered" evidence="5">
    <location>
        <begin position="261"/>
        <end position="285"/>
    </location>
</feature>
<feature type="compositionally biased region" description="Basic and acidic residues" evidence="5">
    <location>
        <begin position="83"/>
        <end position="92"/>
    </location>
</feature>
<feature type="compositionally biased region" description="Basic and acidic residues" evidence="5">
    <location>
        <begin position="267"/>
        <end position="284"/>
    </location>
</feature>
<feature type="active site" description="Proton donor" evidence="2">
    <location>
        <position position="418"/>
    </location>
</feature>
<feature type="binding site" evidence="2">
    <location>
        <begin position="311"/>
        <end position="313"/>
    </location>
    <ligand>
        <name>FMN</name>
        <dbReference type="ChEBI" id="CHEBI:58210"/>
    </ligand>
</feature>
<feature type="binding site" evidence="2">
    <location>
        <position position="386"/>
    </location>
    <ligand>
        <name>FMN</name>
        <dbReference type="ChEBI" id="CHEBI:58210"/>
    </ligand>
</feature>
<feature type="binding site" evidence="2">
    <location>
        <position position="458"/>
    </location>
    <ligand>
        <name>FMN</name>
        <dbReference type="ChEBI" id="CHEBI:58210"/>
    </ligand>
</feature>
<feature type="binding site" evidence="2">
    <location>
        <position position="500"/>
    </location>
    <ligand>
        <name>FMN</name>
        <dbReference type="ChEBI" id="CHEBI:58210"/>
    </ligand>
</feature>
<feature type="binding site" evidence="2">
    <location>
        <begin position="557"/>
        <end position="559"/>
    </location>
    <ligand>
        <name>FMN</name>
        <dbReference type="ChEBI" id="CHEBI:58210"/>
    </ligand>
</feature>
<feature type="binding site" evidence="2">
    <location>
        <begin position="581"/>
        <end position="582"/>
    </location>
    <ligand>
        <name>FMN</name>
        <dbReference type="ChEBI" id="CHEBI:58210"/>
    </ligand>
</feature>
<proteinExistence type="inferred from homology"/>
<accession>Q5BF62</accession>
<accession>C8VQF7</accession>
<comment type="function">
    <text evidence="1 3">Catalyzes the synthesis of dihydrouridine, a modified base found in the D-loop of most tRNAs. Specifically modifies U47 in cytoplasmic tRNAs (By similarity). Catalyzes the synthesis of dihydrouridine in some mRNAs, thereby affecting their translation (By similarity).</text>
</comment>
<comment type="catalytic activity">
    <reaction evidence="1">
        <text>5,6-dihydrouridine(47) in tRNA + NAD(+) = uridine(47) in tRNA + NADH + H(+)</text>
        <dbReference type="Rhea" id="RHEA:53364"/>
        <dbReference type="Rhea" id="RHEA-COMP:13539"/>
        <dbReference type="Rhea" id="RHEA-COMP:13540"/>
        <dbReference type="ChEBI" id="CHEBI:15378"/>
        <dbReference type="ChEBI" id="CHEBI:57540"/>
        <dbReference type="ChEBI" id="CHEBI:57945"/>
        <dbReference type="ChEBI" id="CHEBI:65315"/>
        <dbReference type="ChEBI" id="CHEBI:74443"/>
        <dbReference type="EC" id="1.3.1.89"/>
    </reaction>
    <physiologicalReaction direction="right-to-left" evidence="1">
        <dbReference type="Rhea" id="RHEA:53366"/>
    </physiologicalReaction>
</comment>
<comment type="catalytic activity">
    <reaction evidence="1">
        <text>5,6-dihydrouridine(47) in tRNA + NADP(+) = uridine(47) in tRNA + NADPH + H(+)</text>
        <dbReference type="Rhea" id="RHEA:53360"/>
        <dbReference type="Rhea" id="RHEA-COMP:13539"/>
        <dbReference type="Rhea" id="RHEA-COMP:13540"/>
        <dbReference type="ChEBI" id="CHEBI:15378"/>
        <dbReference type="ChEBI" id="CHEBI:57783"/>
        <dbReference type="ChEBI" id="CHEBI:58349"/>
        <dbReference type="ChEBI" id="CHEBI:65315"/>
        <dbReference type="ChEBI" id="CHEBI:74443"/>
        <dbReference type="EC" id="1.3.1.89"/>
    </reaction>
    <physiologicalReaction direction="right-to-left" evidence="1">
        <dbReference type="Rhea" id="RHEA:53362"/>
    </physiologicalReaction>
</comment>
<comment type="catalytic activity">
    <reaction evidence="3">
        <text>a 5,6-dihydrouridine in mRNA + NAD(+) = a uridine in mRNA + NADH + H(+)</text>
        <dbReference type="Rhea" id="RHEA:69851"/>
        <dbReference type="Rhea" id="RHEA-COMP:14658"/>
        <dbReference type="Rhea" id="RHEA-COMP:17789"/>
        <dbReference type="ChEBI" id="CHEBI:15378"/>
        <dbReference type="ChEBI" id="CHEBI:57540"/>
        <dbReference type="ChEBI" id="CHEBI:57945"/>
        <dbReference type="ChEBI" id="CHEBI:65315"/>
        <dbReference type="ChEBI" id="CHEBI:74443"/>
    </reaction>
    <physiologicalReaction direction="right-to-left" evidence="3">
        <dbReference type="Rhea" id="RHEA:69853"/>
    </physiologicalReaction>
</comment>
<comment type="catalytic activity">
    <reaction evidence="3">
        <text>a 5,6-dihydrouridine in mRNA + NADP(+) = a uridine in mRNA + NADPH + H(+)</text>
        <dbReference type="Rhea" id="RHEA:69855"/>
        <dbReference type="Rhea" id="RHEA-COMP:14658"/>
        <dbReference type="Rhea" id="RHEA-COMP:17789"/>
        <dbReference type="ChEBI" id="CHEBI:15378"/>
        <dbReference type="ChEBI" id="CHEBI:57783"/>
        <dbReference type="ChEBI" id="CHEBI:58349"/>
        <dbReference type="ChEBI" id="CHEBI:65315"/>
        <dbReference type="ChEBI" id="CHEBI:74443"/>
    </reaction>
    <physiologicalReaction direction="right-to-left" evidence="3">
        <dbReference type="Rhea" id="RHEA:69857"/>
    </physiologicalReaction>
</comment>
<comment type="cofactor">
    <cofactor evidence="2">
        <name>FMN</name>
        <dbReference type="ChEBI" id="CHEBI:58210"/>
    </cofactor>
</comment>
<comment type="subcellular location">
    <subcellularLocation>
        <location evidence="1">Cytoplasm</location>
    </subcellularLocation>
    <subcellularLocation>
        <location evidence="1">Nucleus</location>
    </subcellularLocation>
</comment>
<comment type="similarity">
    <text evidence="6">Belongs to the Dus family. Dus3 subfamily.</text>
</comment>
<organism>
    <name type="scientific">Emericella nidulans (strain FGSC A4 / ATCC 38163 / CBS 112.46 / NRRL 194 / M139)</name>
    <name type="common">Aspergillus nidulans</name>
    <dbReference type="NCBI Taxonomy" id="227321"/>
    <lineage>
        <taxon>Eukaryota</taxon>
        <taxon>Fungi</taxon>
        <taxon>Dikarya</taxon>
        <taxon>Ascomycota</taxon>
        <taxon>Pezizomycotina</taxon>
        <taxon>Eurotiomycetes</taxon>
        <taxon>Eurotiomycetidae</taxon>
        <taxon>Eurotiales</taxon>
        <taxon>Aspergillaceae</taxon>
        <taxon>Aspergillus</taxon>
        <taxon>Aspergillus subgen. Nidulantes</taxon>
    </lineage>
</organism>